<protein>
    <recommendedName>
        <fullName evidence="1">Fluoride-specific ion channel FluC 1</fullName>
    </recommendedName>
</protein>
<dbReference type="EMBL" id="BA000018">
    <property type="protein sequence ID" value="BAB42869.1"/>
    <property type="molecule type" value="Genomic_DNA"/>
</dbReference>
<dbReference type="PIR" id="H89963">
    <property type="entry name" value="H89963"/>
</dbReference>
<dbReference type="SMR" id="P61384"/>
<dbReference type="EnsemblBacteria" id="BAB42869">
    <property type="protein sequence ID" value="BAB42869"/>
    <property type="gene ID" value="BAB42869"/>
</dbReference>
<dbReference type="KEGG" id="sau:SA1601"/>
<dbReference type="HOGENOM" id="CLU_114342_3_2_9"/>
<dbReference type="GO" id="GO:0005886">
    <property type="term" value="C:plasma membrane"/>
    <property type="evidence" value="ECO:0007669"/>
    <property type="project" value="UniProtKB-SubCell"/>
</dbReference>
<dbReference type="GO" id="GO:0062054">
    <property type="term" value="F:fluoride channel activity"/>
    <property type="evidence" value="ECO:0007669"/>
    <property type="project" value="UniProtKB-UniRule"/>
</dbReference>
<dbReference type="GO" id="GO:0046872">
    <property type="term" value="F:metal ion binding"/>
    <property type="evidence" value="ECO:0007669"/>
    <property type="project" value="UniProtKB-KW"/>
</dbReference>
<dbReference type="GO" id="GO:0140114">
    <property type="term" value="P:cellular detoxification of fluoride"/>
    <property type="evidence" value="ECO:0007669"/>
    <property type="project" value="UniProtKB-UniRule"/>
</dbReference>
<dbReference type="HAMAP" id="MF_00454">
    <property type="entry name" value="FluC"/>
    <property type="match status" value="1"/>
</dbReference>
<dbReference type="InterPro" id="IPR003691">
    <property type="entry name" value="FluC"/>
</dbReference>
<dbReference type="NCBIfam" id="TIGR00494">
    <property type="entry name" value="crcB"/>
    <property type="match status" value="1"/>
</dbReference>
<dbReference type="NCBIfam" id="NF010797">
    <property type="entry name" value="PRK14201.1"/>
    <property type="match status" value="1"/>
</dbReference>
<dbReference type="PANTHER" id="PTHR28259">
    <property type="entry name" value="FLUORIDE EXPORT PROTEIN 1-RELATED"/>
    <property type="match status" value="1"/>
</dbReference>
<dbReference type="PANTHER" id="PTHR28259:SF16">
    <property type="entry name" value="FLUORIDE-SPECIFIC ION CHANNEL FLUC 2"/>
    <property type="match status" value="1"/>
</dbReference>
<dbReference type="Pfam" id="PF02537">
    <property type="entry name" value="CRCB"/>
    <property type="match status" value="1"/>
</dbReference>
<organism>
    <name type="scientific">Staphylococcus aureus (strain N315)</name>
    <dbReference type="NCBI Taxonomy" id="158879"/>
    <lineage>
        <taxon>Bacteria</taxon>
        <taxon>Bacillati</taxon>
        <taxon>Bacillota</taxon>
        <taxon>Bacilli</taxon>
        <taxon>Bacillales</taxon>
        <taxon>Staphylococcaceae</taxon>
        <taxon>Staphylococcus</taxon>
    </lineage>
</organism>
<reference key="1">
    <citation type="journal article" date="2001" name="Lancet">
        <title>Whole genome sequencing of meticillin-resistant Staphylococcus aureus.</title>
        <authorList>
            <person name="Kuroda M."/>
            <person name="Ohta T."/>
            <person name="Uchiyama I."/>
            <person name="Baba T."/>
            <person name="Yuzawa H."/>
            <person name="Kobayashi I."/>
            <person name="Cui L."/>
            <person name="Oguchi A."/>
            <person name="Aoki K."/>
            <person name="Nagai Y."/>
            <person name="Lian J.-Q."/>
            <person name="Ito T."/>
            <person name="Kanamori M."/>
            <person name="Matsumaru H."/>
            <person name="Maruyama A."/>
            <person name="Murakami H."/>
            <person name="Hosoyama A."/>
            <person name="Mizutani-Ui Y."/>
            <person name="Takahashi N.K."/>
            <person name="Sawano T."/>
            <person name="Inoue R."/>
            <person name="Kaito C."/>
            <person name="Sekimizu K."/>
            <person name="Hirakawa H."/>
            <person name="Kuhara S."/>
            <person name="Goto S."/>
            <person name="Yabuzaki J."/>
            <person name="Kanehisa M."/>
            <person name="Yamashita A."/>
            <person name="Oshima K."/>
            <person name="Furuya K."/>
            <person name="Yoshino C."/>
            <person name="Shiba T."/>
            <person name="Hattori M."/>
            <person name="Ogasawara N."/>
            <person name="Hayashi H."/>
            <person name="Hiramatsu K."/>
        </authorList>
    </citation>
    <scope>NUCLEOTIDE SEQUENCE [LARGE SCALE GENOMIC DNA]</scope>
    <source>
        <strain>N315</strain>
    </source>
</reference>
<evidence type="ECO:0000255" key="1">
    <source>
        <dbReference type="HAMAP-Rule" id="MF_00454"/>
    </source>
</evidence>
<accession>P61384</accession>
<accession>Q99T86</accession>
<keyword id="KW-1003">Cell membrane</keyword>
<keyword id="KW-0407">Ion channel</keyword>
<keyword id="KW-0406">Ion transport</keyword>
<keyword id="KW-0472">Membrane</keyword>
<keyword id="KW-0479">Metal-binding</keyword>
<keyword id="KW-0915">Sodium</keyword>
<keyword id="KW-0812">Transmembrane</keyword>
<keyword id="KW-1133">Transmembrane helix</keyword>
<keyword id="KW-0813">Transport</keyword>
<proteinExistence type="inferred from homology"/>
<gene>
    <name evidence="1" type="primary">fluC1</name>
    <name evidence="1" type="synonym">crcB1</name>
    <name type="ordered locus">SA1601</name>
</gene>
<feature type="chain" id="PRO_0000110177" description="Fluoride-specific ion channel FluC 1">
    <location>
        <begin position="1"/>
        <end position="147"/>
    </location>
</feature>
<feature type="transmembrane region" description="Helical" evidence="1">
    <location>
        <begin position="29"/>
        <end position="49"/>
    </location>
</feature>
<feature type="transmembrane region" description="Helical" evidence="1">
    <location>
        <begin position="61"/>
        <end position="81"/>
    </location>
</feature>
<feature type="transmembrane region" description="Helical" evidence="1">
    <location>
        <begin position="90"/>
        <end position="110"/>
    </location>
</feature>
<feature type="transmembrane region" description="Helical" evidence="1">
    <location>
        <begin position="118"/>
        <end position="138"/>
    </location>
</feature>
<feature type="binding site" evidence="1">
    <location>
        <position position="97"/>
    </location>
    <ligand>
        <name>Na(+)</name>
        <dbReference type="ChEBI" id="CHEBI:29101"/>
        <note>structural</note>
    </ligand>
</feature>
<feature type="binding site" evidence="1">
    <location>
        <position position="100"/>
    </location>
    <ligand>
        <name>Na(+)</name>
        <dbReference type="ChEBI" id="CHEBI:29101"/>
        <note>structural</note>
    </ligand>
</feature>
<sequence length="147" mass="16299">MHRQFLSSCCQNLFFKFKLLLFEVNQMQYVYIFIGGALGALLRYLISFLNTDGGFPIGTLIANLTGAFVMGLLTALTIAFFSNHPTLKKAITTGFLGALTTFSTFQLELIHMFDHQQFITLLLYAVTSYVFGILLCYVGIKLGGGLS</sequence>
<name>FLUC1_STAAN</name>
<comment type="function">
    <text evidence="1">Fluoride-specific ion channel. Important for reducing fluoride concentration in the cell, thus reducing its toxicity.</text>
</comment>
<comment type="catalytic activity">
    <reaction evidence="1">
        <text>fluoride(in) = fluoride(out)</text>
        <dbReference type="Rhea" id="RHEA:76159"/>
        <dbReference type="ChEBI" id="CHEBI:17051"/>
    </reaction>
    <physiologicalReaction direction="left-to-right" evidence="1">
        <dbReference type="Rhea" id="RHEA:76160"/>
    </physiologicalReaction>
</comment>
<comment type="activity regulation">
    <text evidence="1">Na(+) is not transported, but it plays an essential structural role and its presence is essential for fluoride channel function.</text>
</comment>
<comment type="subcellular location">
    <subcellularLocation>
        <location evidence="1">Cell membrane</location>
        <topology evidence="1">Multi-pass membrane protein</topology>
    </subcellularLocation>
</comment>
<comment type="similarity">
    <text evidence="1">Belongs to the fluoride channel Fluc/FEX (TC 1.A.43) family.</text>
</comment>